<proteinExistence type="inferred from homology"/>
<reference key="1">
    <citation type="journal article" date="2007" name="Proc. Natl. Acad. Sci. U.S.A.">
        <title>Genome plasticity of BCG and impact on vaccine efficacy.</title>
        <authorList>
            <person name="Brosch R."/>
            <person name="Gordon S.V."/>
            <person name="Garnier T."/>
            <person name="Eiglmeier K."/>
            <person name="Frigui W."/>
            <person name="Valenti P."/>
            <person name="Dos Santos S."/>
            <person name="Duthoy S."/>
            <person name="Lacroix C."/>
            <person name="Garcia-Pelayo C."/>
            <person name="Inwald J.K."/>
            <person name="Golby P."/>
            <person name="Garcia J.N."/>
            <person name="Hewinson R.G."/>
            <person name="Behr M.A."/>
            <person name="Quail M.A."/>
            <person name="Churcher C."/>
            <person name="Barrell B.G."/>
            <person name="Parkhill J."/>
            <person name="Cole S.T."/>
        </authorList>
    </citation>
    <scope>NUCLEOTIDE SEQUENCE [LARGE SCALE GENOMIC DNA]</scope>
    <source>
        <strain>BCG / Pasteur 1173P2</strain>
    </source>
</reference>
<keyword id="KW-0067">ATP-binding</keyword>
<keyword id="KW-0143">Chaperone</keyword>
<keyword id="KW-0963">Cytoplasm</keyword>
<keyword id="KW-0547">Nucleotide-binding</keyword>
<keyword id="KW-0346">Stress response</keyword>
<feature type="chain" id="PRO_1000014931" description="Chaperone protein HtpG">
    <location>
        <begin position="1"/>
        <end position="647"/>
    </location>
</feature>
<feature type="region of interest" description="A; substrate-binding" evidence="1">
    <location>
        <begin position="1"/>
        <end position="353"/>
    </location>
</feature>
<feature type="region of interest" description="B" evidence="1">
    <location>
        <begin position="354"/>
        <end position="567"/>
    </location>
</feature>
<feature type="region of interest" description="C" evidence="1">
    <location>
        <begin position="568"/>
        <end position="647"/>
    </location>
</feature>
<dbReference type="EMBL" id="AM408590">
    <property type="protein sequence ID" value="CAL72303.1"/>
    <property type="molecule type" value="Genomic_DNA"/>
</dbReference>
<dbReference type="RefSeq" id="WP_003411855.1">
    <property type="nucleotide sequence ID" value="NC_008769.1"/>
</dbReference>
<dbReference type="SMR" id="A1KKZ1"/>
<dbReference type="GeneID" id="45426279"/>
<dbReference type="KEGG" id="mbb:BCG_2315c"/>
<dbReference type="HOGENOM" id="CLU_006684_3_0_11"/>
<dbReference type="Proteomes" id="UP000001472">
    <property type="component" value="Chromosome"/>
</dbReference>
<dbReference type="GO" id="GO:0005737">
    <property type="term" value="C:cytoplasm"/>
    <property type="evidence" value="ECO:0007669"/>
    <property type="project" value="UniProtKB-SubCell"/>
</dbReference>
<dbReference type="GO" id="GO:0005524">
    <property type="term" value="F:ATP binding"/>
    <property type="evidence" value="ECO:0007669"/>
    <property type="project" value="UniProtKB-UniRule"/>
</dbReference>
<dbReference type="GO" id="GO:0016887">
    <property type="term" value="F:ATP hydrolysis activity"/>
    <property type="evidence" value="ECO:0007669"/>
    <property type="project" value="InterPro"/>
</dbReference>
<dbReference type="GO" id="GO:0140662">
    <property type="term" value="F:ATP-dependent protein folding chaperone"/>
    <property type="evidence" value="ECO:0007669"/>
    <property type="project" value="InterPro"/>
</dbReference>
<dbReference type="GO" id="GO:0051082">
    <property type="term" value="F:unfolded protein binding"/>
    <property type="evidence" value="ECO:0007669"/>
    <property type="project" value="UniProtKB-UniRule"/>
</dbReference>
<dbReference type="CDD" id="cd16927">
    <property type="entry name" value="HATPase_Hsp90-like"/>
    <property type="match status" value="1"/>
</dbReference>
<dbReference type="FunFam" id="1.20.120.790:FF:000006">
    <property type="entry name" value="Chaperone protein HtpG"/>
    <property type="match status" value="1"/>
</dbReference>
<dbReference type="FunFam" id="3.40.50.11260:FF:000005">
    <property type="entry name" value="Heat shock protein 90"/>
    <property type="match status" value="1"/>
</dbReference>
<dbReference type="FunFam" id="3.30.230.80:FF:000002">
    <property type="entry name" value="Molecular chaperone HtpG"/>
    <property type="match status" value="1"/>
</dbReference>
<dbReference type="FunFam" id="3.30.565.10:FF:000009">
    <property type="entry name" value="Molecular chaperone HtpG"/>
    <property type="match status" value="1"/>
</dbReference>
<dbReference type="Gene3D" id="3.30.230.80">
    <property type="match status" value="1"/>
</dbReference>
<dbReference type="Gene3D" id="3.40.50.11260">
    <property type="match status" value="1"/>
</dbReference>
<dbReference type="Gene3D" id="1.20.120.790">
    <property type="entry name" value="Heat shock protein 90, C-terminal domain"/>
    <property type="match status" value="1"/>
</dbReference>
<dbReference type="Gene3D" id="3.30.565.10">
    <property type="entry name" value="Histidine kinase-like ATPase, C-terminal domain"/>
    <property type="match status" value="1"/>
</dbReference>
<dbReference type="HAMAP" id="MF_00505">
    <property type="entry name" value="HSP90"/>
    <property type="match status" value="1"/>
</dbReference>
<dbReference type="InterPro" id="IPR036890">
    <property type="entry name" value="HATPase_C_sf"/>
</dbReference>
<dbReference type="InterPro" id="IPR019805">
    <property type="entry name" value="Heat_shock_protein_90_CS"/>
</dbReference>
<dbReference type="InterPro" id="IPR037196">
    <property type="entry name" value="HSP90_C"/>
</dbReference>
<dbReference type="InterPro" id="IPR001404">
    <property type="entry name" value="Hsp90_fam"/>
</dbReference>
<dbReference type="InterPro" id="IPR020575">
    <property type="entry name" value="Hsp90_N"/>
</dbReference>
<dbReference type="InterPro" id="IPR020568">
    <property type="entry name" value="Ribosomal_Su5_D2-typ_SF"/>
</dbReference>
<dbReference type="NCBIfam" id="NF003555">
    <property type="entry name" value="PRK05218.1"/>
    <property type="match status" value="1"/>
</dbReference>
<dbReference type="PANTHER" id="PTHR11528">
    <property type="entry name" value="HEAT SHOCK PROTEIN 90 FAMILY MEMBER"/>
    <property type="match status" value="1"/>
</dbReference>
<dbReference type="Pfam" id="PF13589">
    <property type="entry name" value="HATPase_c_3"/>
    <property type="match status" value="1"/>
</dbReference>
<dbReference type="Pfam" id="PF00183">
    <property type="entry name" value="HSP90"/>
    <property type="match status" value="1"/>
</dbReference>
<dbReference type="PIRSF" id="PIRSF002583">
    <property type="entry name" value="Hsp90"/>
    <property type="match status" value="1"/>
</dbReference>
<dbReference type="PRINTS" id="PR00775">
    <property type="entry name" value="HEATSHOCK90"/>
</dbReference>
<dbReference type="SMART" id="SM00387">
    <property type="entry name" value="HATPase_c"/>
    <property type="match status" value="1"/>
</dbReference>
<dbReference type="SUPFAM" id="SSF55874">
    <property type="entry name" value="ATPase domain of HSP90 chaperone/DNA topoisomerase II/histidine kinase"/>
    <property type="match status" value="1"/>
</dbReference>
<dbReference type="SUPFAM" id="SSF110942">
    <property type="entry name" value="HSP90 C-terminal domain"/>
    <property type="match status" value="1"/>
</dbReference>
<dbReference type="SUPFAM" id="SSF54211">
    <property type="entry name" value="Ribosomal protein S5 domain 2-like"/>
    <property type="match status" value="1"/>
</dbReference>
<dbReference type="PROSITE" id="PS00298">
    <property type="entry name" value="HSP90"/>
    <property type="match status" value="1"/>
</dbReference>
<protein>
    <recommendedName>
        <fullName evidence="1">Chaperone protein HtpG</fullName>
    </recommendedName>
    <alternativeName>
        <fullName evidence="1">Heat shock protein HtpG</fullName>
    </alternativeName>
    <alternativeName>
        <fullName evidence="1">High temperature protein G</fullName>
    </alternativeName>
</protein>
<accession>A1KKZ1</accession>
<sequence length="647" mass="72961">MNAHVEQLEFQAEARQLLDLMVHSVYSNKDAFLRELISNASDALDKLRIEALRNKDLEVDTSDLHIEIDADKAARTLTVRDNGIGMAREEVVDLIGTLAKSGTAELRAQLREAKNAAASEELIGQFGIGFYSSFMVADKVQLLTRKAGESAATRWESSGEGTYTIESVEDAPQGTSVTLHLKPEDAEDDLHDYTSEWKIRNLVKKYSDFIAWPIRMDVERRTPASQEEGGEGGEETVTIETETLNSMKALWARPKEEVSEQEYKEFYKHVAHAWDDPLEIIAMKAEGTFEYQALLFIPSHAPFDLFDRDAHVGIQLYVKRVFIMGDCDQLMPEYLRFVKGVVDAQDMSLNVSREILQQDRQIKAIRRRLTKKVLSTIKDVQSSRPEDYRTFWTQFGRVLKEGLLSDIDNRETLLGISSFVSTYSEEEPTTLAEYVERMKDGQQQIFYATGETRQQLLKSPHLEAFKAKGYEVLLLTDPVDEVWVGMVPEFDGKPLQSVAKGEVDLSSEEDTSEAEREERQKEFADLLTWLQETLSDHVKEVRLSTRLTESPACLITDAFGMTPALARIYRASGQEVPVGKRILELNPSHPLVTGLRQAHQDRADDAEKSLAETAELLYGTALLAEGGALEDPARFAELLAERLARTL</sequence>
<gene>
    <name evidence="1" type="primary">htpG</name>
    <name type="ordered locus">BCG_2315c</name>
</gene>
<name>HTPG_MYCBP</name>
<evidence type="ECO:0000255" key="1">
    <source>
        <dbReference type="HAMAP-Rule" id="MF_00505"/>
    </source>
</evidence>
<comment type="function">
    <text evidence="1">Molecular chaperone. Has ATPase activity.</text>
</comment>
<comment type="subunit">
    <text evidence="1">Homodimer.</text>
</comment>
<comment type="subcellular location">
    <subcellularLocation>
        <location evidence="1">Cytoplasm</location>
    </subcellularLocation>
</comment>
<comment type="similarity">
    <text evidence="1">Belongs to the heat shock protein 90 family.</text>
</comment>
<organism>
    <name type="scientific">Mycobacterium bovis (strain BCG / Pasteur 1173P2)</name>
    <dbReference type="NCBI Taxonomy" id="410289"/>
    <lineage>
        <taxon>Bacteria</taxon>
        <taxon>Bacillati</taxon>
        <taxon>Actinomycetota</taxon>
        <taxon>Actinomycetes</taxon>
        <taxon>Mycobacteriales</taxon>
        <taxon>Mycobacteriaceae</taxon>
        <taxon>Mycobacterium</taxon>
        <taxon>Mycobacterium tuberculosis complex</taxon>
    </lineage>
</organism>